<dbReference type="EMBL" id="AE016822">
    <property type="protein sequence ID" value="AAT90015.1"/>
    <property type="molecule type" value="Genomic_DNA"/>
</dbReference>
<dbReference type="RefSeq" id="WP_011186994.1">
    <property type="nucleotide sequence ID" value="NC_006087.1"/>
</dbReference>
<dbReference type="SMR" id="Q6AC77"/>
<dbReference type="STRING" id="281090.Lxx23770"/>
<dbReference type="KEGG" id="lxx:Lxx23770"/>
<dbReference type="eggNOG" id="COG0576">
    <property type="taxonomic scope" value="Bacteria"/>
</dbReference>
<dbReference type="HOGENOM" id="CLU_057217_4_1_11"/>
<dbReference type="Proteomes" id="UP000001306">
    <property type="component" value="Chromosome"/>
</dbReference>
<dbReference type="GO" id="GO:0005737">
    <property type="term" value="C:cytoplasm"/>
    <property type="evidence" value="ECO:0007669"/>
    <property type="project" value="UniProtKB-SubCell"/>
</dbReference>
<dbReference type="GO" id="GO:0000774">
    <property type="term" value="F:adenyl-nucleotide exchange factor activity"/>
    <property type="evidence" value="ECO:0007669"/>
    <property type="project" value="InterPro"/>
</dbReference>
<dbReference type="GO" id="GO:0042803">
    <property type="term" value="F:protein homodimerization activity"/>
    <property type="evidence" value="ECO:0007669"/>
    <property type="project" value="InterPro"/>
</dbReference>
<dbReference type="GO" id="GO:0051087">
    <property type="term" value="F:protein-folding chaperone binding"/>
    <property type="evidence" value="ECO:0007669"/>
    <property type="project" value="InterPro"/>
</dbReference>
<dbReference type="GO" id="GO:0051082">
    <property type="term" value="F:unfolded protein binding"/>
    <property type="evidence" value="ECO:0007669"/>
    <property type="project" value="TreeGrafter"/>
</dbReference>
<dbReference type="GO" id="GO:0006457">
    <property type="term" value="P:protein folding"/>
    <property type="evidence" value="ECO:0007669"/>
    <property type="project" value="InterPro"/>
</dbReference>
<dbReference type="CDD" id="cd00446">
    <property type="entry name" value="GrpE"/>
    <property type="match status" value="1"/>
</dbReference>
<dbReference type="Gene3D" id="3.90.20.20">
    <property type="match status" value="1"/>
</dbReference>
<dbReference type="Gene3D" id="2.30.22.10">
    <property type="entry name" value="Head domain of nucleotide exchange factor GrpE"/>
    <property type="match status" value="1"/>
</dbReference>
<dbReference type="HAMAP" id="MF_01151">
    <property type="entry name" value="GrpE"/>
    <property type="match status" value="1"/>
</dbReference>
<dbReference type="InterPro" id="IPR000740">
    <property type="entry name" value="GrpE"/>
</dbReference>
<dbReference type="InterPro" id="IPR013805">
    <property type="entry name" value="GrpE_coiled_coil"/>
</dbReference>
<dbReference type="InterPro" id="IPR009012">
    <property type="entry name" value="GrpE_head"/>
</dbReference>
<dbReference type="PANTHER" id="PTHR21237">
    <property type="entry name" value="GRPE PROTEIN"/>
    <property type="match status" value="1"/>
</dbReference>
<dbReference type="PANTHER" id="PTHR21237:SF23">
    <property type="entry name" value="GRPE PROTEIN HOMOLOG, MITOCHONDRIAL"/>
    <property type="match status" value="1"/>
</dbReference>
<dbReference type="Pfam" id="PF01025">
    <property type="entry name" value="GrpE"/>
    <property type="match status" value="1"/>
</dbReference>
<dbReference type="PRINTS" id="PR00773">
    <property type="entry name" value="GRPEPROTEIN"/>
</dbReference>
<dbReference type="SUPFAM" id="SSF58014">
    <property type="entry name" value="Coiled-coil domain of nucleotide exchange factor GrpE"/>
    <property type="match status" value="1"/>
</dbReference>
<dbReference type="SUPFAM" id="SSF51064">
    <property type="entry name" value="Head domain of nucleotide exchange factor GrpE"/>
    <property type="match status" value="1"/>
</dbReference>
<dbReference type="PROSITE" id="PS01071">
    <property type="entry name" value="GRPE"/>
    <property type="match status" value="1"/>
</dbReference>
<evidence type="ECO:0000255" key="1">
    <source>
        <dbReference type="HAMAP-Rule" id="MF_01151"/>
    </source>
</evidence>
<evidence type="ECO:0000256" key="2">
    <source>
        <dbReference type="SAM" id="MobiDB-lite"/>
    </source>
</evidence>
<gene>
    <name evidence="1" type="primary">grpE</name>
    <name type="ordered locus">Lxx23770</name>
</gene>
<feature type="chain" id="PRO_1000053599" description="Protein GrpE">
    <location>
        <begin position="1"/>
        <end position="222"/>
    </location>
</feature>
<feature type="region of interest" description="Disordered" evidence="2">
    <location>
        <begin position="1"/>
        <end position="64"/>
    </location>
</feature>
<feature type="compositionally biased region" description="Basic and acidic residues" evidence="2">
    <location>
        <begin position="16"/>
        <end position="44"/>
    </location>
</feature>
<feature type="compositionally biased region" description="Acidic residues" evidence="2">
    <location>
        <begin position="54"/>
        <end position="64"/>
    </location>
</feature>
<sequence length="222" mass="24108">MSDQNLGQGSDEPEREEPIVRDKRRIDPETGKVREPQDLSHEELVDVGPAGESQGEEILSDDDLDLLSGQTTADQLAADQLAADQLAAERLADLQRVTAEYANYRKRTESNREIERERAIGDAVKGLIPVLDDLERADTHGDLIEGSAFATIAAKLRASVERLGLLPYGEKGEPFDPQIHEAIFQQPTPGVTADTVADVVETGYRLGSTTVRVAKVVVAVPA</sequence>
<proteinExistence type="inferred from homology"/>
<organism>
    <name type="scientific">Leifsonia xyli subsp. xyli (strain CTCB07)</name>
    <dbReference type="NCBI Taxonomy" id="281090"/>
    <lineage>
        <taxon>Bacteria</taxon>
        <taxon>Bacillati</taxon>
        <taxon>Actinomycetota</taxon>
        <taxon>Actinomycetes</taxon>
        <taxon>Micrococcales</taxon>
        <taxon>Microbacteriaceae</taxon>
        <taxon>Leifsonia</taxon>
    </lineage>
</organism>
<reference key="1">
    <citation type="journal article" date="2004" name="Mol. Plant Microbe Interact.">
        <title>The genome sequence of the Gram-positive sugarcane pathogen Leifsonia xyli subsp. xyli.</title>
        <authorList>
            <person name="Monteiro-Vitorello C.B."/>
            <person name="Camargo L.E.A."/>
            <person name="Van Sluys M.A."/>
            <person name="Kitajima J.P."/>
            <person name="Truffi D."/>
            <person name="do Amaral A.M."/>
            <person name="Harakava R."/>
            <person name="de Oliveira J.C.F."/>
            <person name="Wood D."/>
            <person name="de Oliveira M.C."/>
            <person name="Miyaki C.Y."/>
            <person name="Takita M.A."/>
            <person name="da Silva A.C.R."/>
            <person name="Furlan L.R."/>
            <person name="Carraro D.M."/>
            <person name="Camarotte G."/>
            <person name="Almeida N.F. Jr."/>
            <person name="Carrer H."/>
            <person name="Coutinho L.L."/>
            <person name="El-Dorry H.A."/>
            <person name="Ferro M.I.T."/>
            <person name="Gagliardi P.R."/>
            <person name="Giglioti E."/>
            <person name="Goldman M.H.S."/>
            <person name="Goldman G.H."/>
            <person name="Kimura E.T."/>
            <person name="Ferro E.S."/>
            <person name="Kuramae E.E."/>
            <person name="Lemos E.G.M."/>
            <person name="Lemos M.V.F."/>
            <person name="Mauro S.M.Z."/>
            <person name="Machado M.A."/>
            <person name="Marino C.L."/>
            <person name="Menck C.F."/>
            <person name="Nunes L.R."/>
            <person name="Oliveira R.C."/>
            <person name="Pereira G.G."/>
            <person name="Siqueira W."/>
            <person name="de Souza A.A."/>
            <person name="Tsai S.M."/>
            <person name="Zanca A.S."/>
            <person name="Simpson A.J.G."/>
            <person name="Brumbley S.M."/>
            <person name="Setubal J.C."/>
        </authorList>
    </citation>
    <scope>NUCLEOTIDE SEQUENCE [LARGE SCALE GENOMIC DNA]</scope>
    <source>
        <strain>CTCB07</strain>
    </source>
</reference>
<name>GRPE_LEIXX</name>
<protein>
    <recommendedName>
        <fullName evidence="1">Protein GrpE</fullName>
    </recommendedName>
    <alternativeName>
        <fullName evidence="1">HSP-70 cofactor</fullName>
    </alternativeName>
</protein>
<keyword id="KW-0143">Chaperone</keyword>
<keyword id="KW-0963">Cytoplasm</keyword>
<keyword id="KW-1185">Reference proteome</keyword>
<keyword id="KW-0346">Stress response</keyword>
<comment type="function">
    <text evidence="1">Participates actively in the response to hyperosmotic and heat shock by preventing the aggregation of stress-denatured proteins, in association with DnaK and GrpE. It is the nucleotide exchange factor for DnaK and may function as a thermosensor. Unfolded proteins bind initially to DnaJ; upon interaction with the DnaJ-bound protein, DnaK hydrolyzes its bound ATP, resulting in the formation of a stable complex. GrpE releases ADP from DnaK; ATP binding to DnaK triggers the release of the substrate protein, thus completing the reaction cycle. Several rounds of ATP-dependent interactions between DnaJ, DnaK and GrpE are required for fully efficient folding.</text>
</comment>
<comment type="subunit">
    <text evidence="1">Homodimer.</text>
</comment>
<comment type="subcellular location">
    <subcellularLocation>
        <location evidence="1">Cytoplasm</location>
    </subcellularLocation>
</comment>
<comment type="similarity">
    <text evidence="1">Belongs to the GrpE family.</text>
</comment>
<accession>Q6AC77</accession>